<gene>
    <name type="primary">AGA</name>
</gene>
<feature type="chain" id="PRO_0000002337" description="Glycosylasparaginase alpha chain">
    <location>
        <begin position="1"/>
        <end position="17" status="greater than"/>
    </location>
</feature>
<feature type="chain" id="PRO_0000002338" description="Glycosylasparaginase beta chain">
    <location>
        <begin position="18"/>
        <end position="34" status="greater than"/>
    </location>
</feature>
<feature type="active site" description="Nucleophile" evidence="1">
    <location>
        <position position="18"/>
    </location>
</feature>
<feature type="non-consecutive residues" evidence="3">
    <location>
        <begin position="17"/>
        <end position="18"/>
    </location>
</feature>
<feature type="non-terminal residue">
    <location>
        <position position="34"/>
    </location>
</feature>
<accession>P30918</accession>
<keyword id="KW-0068">Autocatalytic cleavage</keyword>
<keyword id="KW-0903">Direct protein sequencing</keyword>
<keyword id="KW-0378">Hydrolase</keyword>
<keyword id="KW-0458">Lysosome</keyword>
<keyword id="KW-0645">Protease</keyword>
<keyword id="KW-1185">Reference proteome</keyword>
<proteinExistence type="evidence at protein level"/>
<comment type="function">
    <text evidence="2">Cleaves the GlcNAc-Asn bond which joins oligosaccharides to the peptide of asparagine-linked glycoproteins.</text>
</comment>
<comment type="catalytic activity">
    <reaction evidence="2">
        <text>N(4)-(beta-N-acetyl-D-glucosaminyl)-L-asparagine + H2O = N-acetyl-beta-D-glucosaminylamine + L-aspartate + H(+)</text>
        <dbReference type="Rhea" id="RHEA:11544"/>
        <dbReference type="ChEBI" id="CHEBI:15377"/>
        <dbReference type="ChEBI" id="CHEBI:15378"/>
        <dbReference type="ChEBI" id="CHEBI:15947"/>
        <dbReference type="ChEBI" id="CHEBI:29991"/>
        <dbReference type="ChEBI" id="CHEBI:58080"/>
        <dbReference type="EC" id="3.5.1.26"/>
    </reaction>
</comment>
<comment type="subunit">
    <text evidence="1">Heterotetramer of two alpha and two beta chains arranged as a dimer of alpha/beta heterodimers.</text>
</comment>
<comment type="subcellular location">
    <subcellularLocation>
        <location>Lysosome</location>
    </subcellularLocation>
</comment>
<comment type="PTM">
    <text evidence="1">Cleaved into an alpha and beta chain by autocatalysis; this activates the enzyme. The N-terminal residue of the beta subunit is responsible for the nucleophile hydrolase activity.</text>
</comment>
<comment type="PTM">
    <text evidence="1">N-glycosylated.</text>
</comment>
<comment type="similarity">
    <text evidence="3">Belongs to the Ntn-hydrolase family.</text>
</comment>
<evidence type="ECO:0000250" key="1">
    <source>
        <dbReference type="UniProtKB" id="P20933"/>
    </source>
</evidence>
<evidence type="ECO:0000269" key="2">
    <source>
    </source>
</evidence>
<evidence type="ECO:0000305" key="3"/>
<dbReference type="EC" id="3.5.1.26" evidence="2"/>
<dbReference type="MEROPS" id="T02.001"/>
<dbReference type="InParanoid" id="P30918"/>
<dbReference type="Proteomes" id="UP000008227">
    <property type="component" value="Unplaced"/>
</dbReference>
<dbReference type="Proteomes" id="UP000314985">
    <property type="component" value="Unplaced"/>
</dbReference>
<dbReference type="Proteomes" id="UP000694570">
    <property type="component" value="Unplaced"/>
</dbReference>
<dbReference type="Proteomes" id="UP000694571">
    <property type="component" value="Unplaced"/>
</dbReference>
<dbReference type="Proteomes" id="UP000694720">
    <property type="component" value="Unplaced"/>
</dbReference>
<dbReference type="Proteomes" id="UP000694722">
    <property type="component" value="Unplaced"/>
</dbReference>
<dbReference type="Proteomes" id="UP000694723">
    <property type="component" value="Unplaced"/>
</dbReference>
<dbReference type="Proteomes" id="UP000694724">
    <property type="component" value="Unplaced"/>
</dbReference>
<dbReference type="Proteomes" id="UP000694725">
    <property type="component" value="Unplaced"/>
</dbReference>
<dbReference type="Proteomes" id="UP000694726">
    <property type="component" value="Unplaced"/>
</dbReference>
<dbReference type="Proteomes" id="UP000694727">
    <property type="component" value="Unplaced"/>
</dbReference>
<dbReference type="Proteomes" id="UP000694728">
    <property type="component" value="Unplaced"/>
</dbReference>
<dbReference type="GO" id="GO:0005764">
    <property type="term" value="C:lysosome"/>
    <property type="evidence" value="ECO:0007669"/>
    <property type="project" value="UniProtKB-SubCell"/>
</dbReference>
<dbReference type="GO" id="GO:0003948">
    <property type="term" value="F:N4-(beta-N-acetylglucosaminyl)-L-asparaginase activity"/>
    <property type="evidence" value="ECO:0007669"/>
    <property type="project" value="UniProtKB-EC"/>
</dbReference>
<dbReference type="GO" id="GO:0008233">
    <property type="term" value="F:peptidase activity"/>
    <property type="evidence" value="ECO:0007669"/>
    <property type="project" value="UniProtKB-KW"/>
</dbReference>
<dbReference type="GO" id="GO:0006508">
    <property type="term" value="P:proteolysis"/>
    <property type="evidence" value="ECO:0007669"/>
    <property type="project" value="UniProtKB-KW"/>
</dbReference>
<reference key="1">
    <citation type="journal article" date="1992" name="Biochem. J.">
        <title>Comparison of liver glycosylasparaginases from six vertebrates.</title>
        <authorList>
            <person name="Tollersrud O.-K."/>
            <person name="Aronson N.N. Jr."/>
        </authorList>
    </citation>
    <scope>PROTEIN SEQUENCE</scope>
    <scope>CATALYTIC ACTIVITY</scope>
    <scope>FUNCTION</scope>
    <scope>SUBUNIT</scope>
    <source>
        <tissue>Liver</tissue>
    </source>
</reference>
<protein>
    <recommendedName>
        <fullName>N(4)-(Beta-N-acetylglucosaminyl)-L-asparaginase</fullName>
        <ecNumber evidence="2">3.5.1.26</ecNumber>
    </recommendedName>
    <alternativeName>
        <fullName>Aspartylglucosaminidase</fullName>
        <shortName>AGA</shortName>
    </alternativeName>
    <alternativeName>
        <fullName>Glycosylasparaginase</fullName>
    </alternativeName>
    <alternativeName>
        <fullName>N4-(N-acetyl-beta-glucosaminyl)-L-asparagine amidase</fullName>
    </alternativeName>
    <component>
        <recommendedName>
            <fullName>Glycosylasparaginase alpha chain</fullName>
        </recommendedName>
    </component>
    <component>
        <recommendedName>
            <fullName>Glycosylasparaginase beta chain</fullName>
        </recommendedName>
    </component>
</protein>
<name>ASPG_PIG</name>
<organism>
    <name type="scientific">Sus scrofa</name>
    <name type="common">Pig</name>
    <dbReference type="NCBI Taxonomy" id="9823"/>
    <lineage>
        <taxon>Eukaryota</taxon>
        <taxon>Metazoa</taxon>
        <taxon>Chordata</taxon>
        <taxon>Craniata</taxon>
        <taxon>Vertebrata</taxon>
        <taxon>Euteleostomi</taxon>
        <taxon>Mammalia</taxon>
        <taxon>Eutheria</taxon>
        <taxon>Laurasiatheria</taxon>
        <taxon>Artiodactyla</taxon>
        <taxon>Suina</taxon>
        <taxon>Suidae</taxon>
        <taxon>Sus</taxon>
    </lineage>
</organism>
<sequence length="34" mass="3621">SXPLPLIVNTWPFKXATTIGMVVIHLKGYTAAGT</sequence>